<accession>Q0WLR1</accession>
<accession>O65586</accession>
<accession>Q8RWT6</accession>
<sequence length="308" mass="33588">MMMMTSLGGGAGGGGGGGGSGGGRFVTYPPPLSVPPSAPQSPNFSGGLRSQPSFLVEQEKYLSELLAERHKLTPFLPVLPHVCRLMNQEILRVTTLLENALSQSRFDHPSPLASGGIFQNSRADMNGWASQFPSERSVSSSPAPNWLNSPGSSSGLIVKRTIRVDIPVDKYPNYNFVGRLLGPRGNSLKRVEASTDCRVLIRGRGSIKDPIKEDMMRGKPGYEHLNEPLHILVEAELPIEIVDARLMQAREILDDLLTPVEETHDFYKKQQLRELALLNGSLREEGSPMSGSISPYNSLGMKRAKTRG</sequence>
<reference key="1">
    <citation type="journal article" date="1999" name="Nature">
        <title>Sequence and analysis of chromosome 4 of the plant Arabidopsis thaliana.</title>
        <authorList>
            <person name="Mayer K.F.X."/>
            <person name="Schueller C."/>
            <person name="Wambutt R."/>
            <person name="Murphy G."/>
            <person name="Volckaert G."/>
            <person name="Pohl T."/>
            <person name="Duesterhoeft A."/>
            <person name="Stiekema W."/>
            <person name="Entian K.-D."/>
            <person name="Terryn N."/>
            <person name="Harris B."/>
            <person name="Ansorge W."/>
            <person name="Brandt P."/>
            <person name="Grivell L.A."/>
            <person name="Rieger M."/>
            <person name="Weichselgartner M."/>
            <person name="de Simone V."/>
            <person name="Obermaier B."/>
            <person name="Mache R."/>
            <person name="Mueller M."/>
            <person name="Kreis M."/>
            <person name="Delseny M."/>
            <person name="Puigdomenech P."/>
            <person name="Watson M."/>
            <person name="Schmidtheini T."/>
            <person name="Reichert B."/>
            <person name="Portetelle D."/>
            <person name="Perez-Alonso M."/>
            <person name="Boutry M."/>
            <person name="Bancroft I."/>
            <person name="Vos P."/>
            <person name="Hoheisel J."/>
            <person name="Zimmermann W."/>
            <person name="Wedler H."/>
            <person name="Ridley P."/>
            <person name="Langham S.-A."/>
            <person name="McCullagh B."/>
            <person name="Bilham L."/>
            <person name="Robben J."/>
            <person name="van der Schueren J."/>
            <person name="Grymonprez B."/>
            <person name="Chuang Y.-J."/>
            <person name="Vandenbussche F."/>
            <person name="Braeken M."/>
            <person name="Weltjens I."/>
            <person name="Voet M."/>
            <person name="Bastiaens I."/>
            <person name="Aert R."/>
            <person name="Defoor E."/>
            <person name="Weitzenegger T."/>
            <person name="Bothe G."/>
            <person name="Ramsperger U."/>
            <person name="Hilbert H."/>
            <person name="Braun M."/>
            <person name="Holzer E."/>
            <person name="Brandt A."/>
            <person name="Peters S."/>
            <person name="van Staveren M."/>
            <person name="Dirkse W."/>
            <person name="Mooijman P."/>
            <person name="Klein Lankhorst R."/>
            <person name="Rose M."/>
            <person name="Hauf J."/>
            <person name="Koetter P."/>
            <person name="Berneiser S."/>
            <person name="Hempel S."/>
            <person name="Feldpausch M."/>
            <person name="Lamberth S."/>
            <person name="Van den Daele H."/>
            <person name="De Keyser A."/>
            <person name="Buysshaert C."/>
            <person name="Gielen J."/>
            <person name="Villarroel R."/>
            <person name="De Clercq R."/>
            <person name="van Montagu M."/>
            <person name="Rogers J."/>
            <person name="Cronin A."/>
            <person name="Quail M.A."/>
            <person name="Bray-Allen S."/>
            <person name="Clark L."/>
            <person name="Doggett J."/>
            <person name="Hall S."/>
            <person name="Kay M."/>
            <person name="Lennard N."/>
            <person name="McLay K."/>
            <person name="Mayes R."/>
            <person name="Pettett A."/>
            <person name="Rajandream M.A."/>
            <person name="Lyne M."/>
            <person name="Benes V."/>
            <person name="Rechmann S."/>
            <person name="Borkova D."/>
            <person name="Bloecker H."/>
            <person name="Scharfe M."/>
            <person name="Grimm M."/>
            <person name="Loehnert T.-H."/>
            <person name="Dose S."/>
            <person name="de Haan M."/>
            <person name="Maarse A.C."/>
            <person name="Schaefer M."/>
            <person name="Mueller-Auer S."/>
            <person name="Gabel C."/>
            <person name="Fuchs M."/>
            <person name="Fartmann B."/>
            <person name="Granderath K."/>
            <person name="Dauner D."/>
            <person name="Herzl A."/>
            <person name="Neumann S."/>
            <person name="Argiriou A."/>
            <person name="Vitale D."/>
            <person name="Liguori R."/>
            <person name="Piravandi E."/>
            <person name="Massenet O."/>
            <person name="Quigley F."/>
            <person name="Clabauld G."/>
            <person name="Muendlein A."/>
            <person name="Felber R."/>
            <person name="Schnabl S."/>
            <person name="Hiller R."/>
            <person name="Schmidt W."/>
            <person name="Lecharny A."/>
            <person name="Aubourg S."/>
            <person name="Chefdor F."/>
            <person name="Cooke R."/>
            <person name="Berger C."/>
            <person name="Monfort A."/>
            <person name="Casacuberta E."/>
            <person name="Gibbons T."/>
            <person name="Weber N."/>
            <person name="Vandenbol M."/>
            <person name="Bargues M."/>
            <person name="Terol J."/>
            <person name="Torres A."/>
            <person name="Perez-Perez A."/>
            <person name="Purnelle B."/>
            <person name="Bent E."/>
            <person name="Johnson S."/>
            <person name="Tacon D."/>
            <person name="Jesse T."/>
            <person name="Heijnen L."/>
            <person name="Schwarz S."/>
            <person name="Scholler P."/>
            <person name="Heber S."/>
            <person name="Francs P."/>
            <person name="Bielke C."/>
            <person name="Frishman D."/>
            <person name="Haase D."/>
            <person name="Lemcke K."/>
            <person name="Mewes H.-W."/>
            <person name="Stocker S."/>
            <person name="Zaccaria P."/>
            <person name="Bevan M."/>
            <person name="Wilson R.K."/>
            <person name="de la Bastide M."/>
            <person name="Habermann K."/>
            <person name="Parnell L."/>
            <person name="Dedhia N."/>
            <person name="Gnoj L."/>
            <person name="Schutz K."/>
            <person name="Huang E."/>
            <person name="Spiegel L."/>
            <person name="Sekhon M."/>
            <person name="Murray J."/>
            <person name="Sheet P."/>
            <person name="Cordes M."/>
            <person name="Abu-Threideh J."/>
            <person name="Stoneking T."/>
            <person name="Kalicki J."/>
            <person name="Graves T."/>
            <person name="Harmon G."/>
            <person name="Edwards J."/>
            <person name="Latreille P."/>
            <person name="Courtney L."/>
            <person name="Cloud J."/>
            <person name="Abbott A."/>
            <person name="Scott K."/>
            <person name="Johnson D."/>
            <person name="Minx P."/>
            <person name="Bentley D."/>
            <person name="Fulton B."/>
            <person name="Miller N."/>
            <person name="Greco T."/>
            <person name="Kemp K."/>
            <person name="Kramer J."/>
            <person name="Fulton L."/>
            <person name="Mardis E."/>
            <person name="Dante M."/>
            <person name="Pepin K."/>
            <person name="Hillier L.W."/>
            <person name="Nelson J."/>
            <person name="Spieth J."/>
            <person name="Ryan E."/>
            <person name="Andrews S."/>
            <person name="Geisel C."/>
            <person name="Layman D."/>
            <person name="Du H."/>
            <person name="Ali J."/>
            <person name="Berghoff A."/>
            <person name="Jones K."/>
            <person name="Drone K."/>
            <person name="Cotton M."/>
            <person name="Joshu C."/>
            <person name="Antonoiu B."/>
            <person name="Zidanic M."/>
            <person name="Strong C."/>
            <person name="Sun H."/>
            <person name="Lamar B."/>
            <person name="Yordan C."/>
            <person name="Ma P."/>
            <person name="Zhong J."/>
            <person name="Preston R."/>
            <person name="Vil D."/>
            <person name="Shekher M."/>
            <person name="Matero A."/>
            <person name="Shah R."/>
            <person name="Swaby I.K."/>
            <person name="O'Shaughnessy A."/>
            <person name="Rodriguez M."/>
            <person name="Hoffman J."/>
            <person name="Till S."/>
            <person name="Granat S."/>
            <person name="Shohdy N."/>
            <person name="Hasegawa A."/>
            <person name="Hameed A."/>
            <person name="Lodhi M."/>
            <person name="Johnson A."/>
            <person name="Chen E."/>
            <person name="Marra M.A."/>
            <person name="Martienssen R."/>
            <person name="McCombie W.R."/>
        </authorList>
    </citation>
    <scope>NUCLEOTIDE SEQUENCE [LARGE SCALE GENOMIC DNA]</scope>
    <source>
        <strain>cv. Columbia</strain>
    </source>
</reference>
<reference key="2">
    <citation type="journal article" date="2017" name="Plant J.">
        <title>Araport11: a complete reannotation of the Arabidopsis thaliana reference genome.</title>
        <authorList>
            <person name="Cheng C.Y."/>
            <person name="Krishnakumar V."/>
            <person name="Chan A.P."/>
            <person name="Thibaud-Nissen F."/>
            <person name="Schobel S."/>
            <person name="Town C.D."/>
        </authorList>
    </citation>
    <scope>GENOME REANNOTATION</scope>
    <source>
        <strain>cv. Columbia</strain>
    </source>
</reference>
<reference key="3">
    <citation type="journal article" date="2003" name="Science">
        <title>Empirical analysis of transcriptional activity in the Arabidopsis genome.</title>
        <authorList>
            <person name="Yamada K."/>
            <person name="Lim J."/>
            <person name="Dale J.M."/>
            <person name="Chen H."/>
            <person name="Shinn P."/>
            <person name="Palm C.J."/>
            <person name="Southwick A.M."/>
            <person name="Wu H.C."/>
            <person name="Kim C.J."/>
            <person name="Nguyen M."/>
            <person name="Pham P.K."/>
            <person name="Cheuk R.F."/>
            <person name="Karlin-Newmann G."/>
            <person name="Liu S.X."/>
            <person name="Lam B."/>
            <person name="Sakano H."/>
            <person name="Wu T."/>
            <person name="Yu G."/>
            <person name="Miranda M."/>
            <person name="Quach H.L."/>
            <person name="Tripp M."/>
            <person name="Chang C.H."/>
            <person name="Lee J.M."/>
            <person name="Toriumi M.J."/>
            <person name="Chan M.M."/>
            <person name="Tang C.C."/>
            <person name="Onodera C.S."/>
            <person name="Deng J.M."/>
            <person name="Akiyama K."/>
            <person name="Ansari Y."/>
            <person name="Arakawa T."/>
            <person name="Banh J."/>
            <person name="Banno F."/>
            <person name="Bowser L."/>
            <person name="Brooks S.Y."/>
            <person name="Carninci P."/>
            <person name="Chao Q."/>
            <person name="Choy N."/>
            <person name="Enju A."/>
            <person name="Goldsmith A.D."/>
            <person name="Gurjal M."/>
            <person name="Hansen N.F."/>
            <person name="Hayashizaki Y."/>
            <person name="Johnson-Hopson C."/>
            <person name="Hsuan V.W."/>
            <person name="Iida K."/>
            <person name="Karnes M."/>
            <person name="Khan S."/>
            <person name="Koesema E."/>
            <person name="Ishida J."/>
            <person name="Jiang P.X."/>
            <person name="Jones T."/>
            <person name="Kawai J."/>
            <person name="Kamiya A."/>
            <person name="Meyers C."/>
            <person name="Nakajima M."/>
            <person name="Narusaka M."/>
            <person name="Seki M."/>
            <person name="Sakurai T."/>
            <person name="Satou M."/>
            <person name="Tamse R."/>
            <person name="Vaysberg M."/>
            <person name="Wallender E.K."/>
            <person name="Wong C."/>
            <person name="Yamamura Y."/>
            <person name="Yuan S."/>
            <person name="Shinozaki K."/>
            <person name="Davis R.W."/>
            <person name="Theologis A."/>
            <person name="Ecker J.R."/>
        </authorList>
    </citation>
    <scope>NUCLEOTIDE SEQUENCE [LARGE SCALE MRNA]</scope>
    <source>
        <strain>cv. Columbia</strain>
    </source>
</reference>
<reference key="4">
    <citation type="submission" date="2006-07" db="EMBL/GenBank/DDBJ databases">
        <title>Large-scale analysis of RIKEN Arabidopsis full-length (RAFL) cDNAs.</title>
        <authorList>
            <person name="Totoki Y."/>
            <person name="Seki M."/>
            <person name="Ishida J."/>
            <person name="Nakajima M."/>
            <person name="Enju A."/>
            <person name="Kamiya A."/>
            <person name="Narusaka M."/>
            <person name="Shin-i T."/>
            <person name="Nakagawa M."/>
            <person name="Sakamoto N."/>
            <person name="Oishi K."/>
            <person name="Kohara Y."/>
            <person name="Kobayashi M."/>
            <person name="Toyoda A."/>
            <person name="Sakaki Y."/>
            <person name="Sakurai T."/>
            <person name="Iida K."/>
            <person name="Akiyama K."/>
            <person name="Satou M."/>
            <person name="Toyoda T."/>
            <person name="Konagaya A."/>
            <person name="Carninci P."/>
            <person name="Kawai J."/>
            <person name="Hayashizaki Y."/>
            <person name="Shinozaki K."/>
        </authorList>
    </citation>
    <scope>NUCLEOTIDE SEQUENCE [LARGE SCALE MRNA]</scope>
    <source>
        <strain>cv. Columbia</strain>
    </source>
</reference>
<reference key="5">
    <citation type="journal article" date="2002" name="Nucleic Acids Res.">
        <title>Genome analysis: RNA recognition motif (RRM) and K homology (KH) domain RNA-binding proteins from the flowering plant Arabidopsis thaliana.</title>
        <authorList>
            <person name="Lorkovic Z.J."/>
            <person name="Barta A."/>
        </authorList>
    </citation>
    <scope>GENE FAMILY</scope>
</reference>
<comment type="subcellular location">
    <subcellularLocation>
        <location evidence="3">Nucleus</location>
    </subcellularLocation>
</comment>
<comment type="sequence caution" evidence="3">
    <conflict type="erroneous gene model prediction">
        <sequence resource="EMBL-CDS" id="CAA18222"/>
    </conflict>
    <text>The predicted gene At4g26480 has been split into 2 genes: At4g26480 and At4g26485.</text>
</comment>
<comment type="sequence caution" evidence="3">
    <conflict type="erroneous gene model prediction">
        <sequence resource="EMBL-CDS" id="CAB79503"/>
    </conflict>
    <text>The predicted gene At4g26480 has been split into 2 genes: At4g26480 and At4g26485.</text>
</comment>
<name>QKIL1_ARATH</name>
<keyword id="KW-0539">Nucleus</keyword>
<keyword id="KW-0597">Phosphoprotein</keyword>
<keyword id="KW-1185">Reference proteome</keyword>
<keyword id="KW-0694">RNA-binding</keyword>
<organism>
    <name type="scientific">Arabidopsis thaliana</name>
    <name type="common">Mouse-ear cress</name>
    <dbReference type="NCBI Taxonomy" id="3702"/>
    <lineage>
        <taxon>Eukaryota</taxon>
        <taxon>Viridiplantae</taxon>
        <taxon>Streptophyta</taxon>
        <taxon>Embryophyta</taxon>
        <taxon>Tracheophyta</taxon>
        <taxon>Spermatophyta</taxon>
        <taxon>Magnoliopsida</taxon>
        <taxon>eudicotyledons</taxon>
        <taxon>Gunneridae</taxon>
        <taxon>Pentapetalae</taxon>
        <taxon>rosids</taxon>
        <taxon>malvids</taxon>
        <taxon>Brassicales</taxon>
        <taxon>Brassicaceae</taxon>
        <taxon>Camelineae</taxon>
        <taxon>Arabidopsis</taxon>
    </lineage>
</organism>
<dbReference type="EMBL" id="AL022223">
    <property type="protein sequence ID" value="CAA18222.1"/>
    <property type="status" value="ALT_SEQ"/>
    <property type="molecule type" value="Genomic_DNA"/>
</dbReference>
<dbReference type="EMBL" id="AL161565">
    <property type="protein sequence ID" value="CAB79503.1"/>
    <property type="status" value="ALT_SEQ"/>
    <property type="molecule type" value="Genomic_DNA"/>
</dbReference>
<dbReference type="EMBL" id="CP002687">
    <property type="protein sequence ID" value="AEE85206.1"/>
    <property type="molecule type" value="Genomic_DNA"/>
</dbReference>
<dbReference type="EMBL" id="CP002687">
    <property type="protein sequence ID" value="ANM67878.1"/>
    <property type="molecule type" value="Genomic_DNA"/>
</dbReference>
<dbReference type="EMBL" id="AY091120">
    <property type="protein sequence ID" value="AAM14070.1"/>
    <property type="molecule type" value="mRNA"/>
</dbReference>
<dbReference type="EMBL" id="AK230131">
    <property type="protein sequence ID" value="BAF01946.1"/>
    <property type="molecule type" value="mRNA"/>
</dbReference>
<dbReference type="PIR" id="T05056">
    <property type="entry name" value="T05056"/>
</dbReference>
<dbReference type="RefSeq" id="NP_001320071.1">
    <property type="nucleotide sequence ID" value="NM_001341802.1"/>
</dbReference>
<dbReference type="RefSeq" id="NP_194378.2">
    <property type="nucleotide sequence ID" value="NM_118781.3"/>
</dbReference>
<dbReference type="SMR" id="Q0WLR1"/>
<dbReference type="FunCoup" id="Q0WLR1">
    <property type="interactions" value="1560"/>
</dbReference>
<dbReference type="STRING" id="3702.Q0WLR1"/>
<dbReference type="GlyGen" id="Q0WLR1">
    <property type="glycosylation" value="1 site, 1 O-linked glycan (1 site)"/>
</dbReference>
<dbReference type="iPTMnet" id="Q0WLR1"/>
<dbReference type="PaxDb" id="3702-AT4G26480.1"/>
<dbReference type="ProteomicsDB" id="236475"/>
<dbReference type="EnsemblPlants" id="AT4G26480.1">
    <property type="protein sequence ID" value="AT4G26480.1"/>
    <property type="gene ID" value="AT4G26480"/>
</dbReference>
<dbReference type="EnsemblPlants" id="AT4G26480.3">
    <property type="protein sequence ID" value="AT4G26480.3"/>
    <property type="gene ID" value="AT4G26480"/>
</dbReference>
<dbReference type="GeneID" id="828754"/>
<dbReference type="Gramene" id="AT4G26480.1">
    <property type="protein sequence ID" value="AT4G26480.1"/>
    <property type="gene ID" value="AT4G26480"/>
</dbReference>
<dbReference type="Gramene" id="AT4G26480.3">
    <property type="protein sequence ID" value="AT4G26480.3"/>
    <property type="gene ID" value="AT4G26480"/>
</dbReference>
<dbReference type="KEGG" id="ath:AT4G26480"/>
<dbReference type="Araport" id="AT4G26480"/>
<dbReference type="TAIR" id="AT4G26480"/>
<dbReference type="eggNOG" id="KOG1588">
    <property type="taxonomic scope" value="Eukaryota"/>
</dbReference>
<dbReference type="HOGENOM" id="CLU_065679_0_1_1"/>
<dbReference type="InParanoid" id="Q0WLR1"/>
<dbReference type="OMA" id="RPVDETH"/>
<dbReference type="OrthoDB" id="6777263at2759"/>
<dbReference type="PRO" id="PR:Q0WLR1"/>
<dbReference type="Proteomes" id="UP000006548">
    <property type="component" value="Chromosome 4"/>
</dbReference>
<dbReference type="ExpressionAtlas" id="Q0WLR1">
    <property type="expression patterns" value="baseline and differential"/>
</dbReference>
<dbReference type="GO" id="GO:0005634">
    <property type="term" value="C:nucleus"/>
    <property type="evidence" value="ECO:0007669"/>
    <property type="project" value="UniProtKB-SubCell"/>
</dbReference>
<dbReference type="GO" id="GO:0003723">
    <property type="term" value="F:RNA binding"/>
    <property type="evidence" value="ECO:0007669"/>
    <property type="project" value="UniProtKB-KW"/>
</dbReference>
<dbReference type="Gene3D" id="3.30.1370.10">
    <property type="entry name" value="K Homology domain, type 1"/>
    <property type="match status" value="1"/>
</dbReference>
<dbReference type="InterPro" id="IPR045071">
    <property type="entry name" value="BBP-like"/>
</dbReference>
<dbReference type="InterPro" id="IPR055256">
    <property type="entry name" value="KH_1_KHDC4/BBP-like"/>
</dbReference>
<dbReference type="InterPro" id="IPR004087">
    <property type="entry name" value="KH_dom"/>
</dbReference>
<dbReference type="InterPro" id="IPR036612">
    <property type="entry name" value="KH_dom_type_1_sf"/>
</dbReference>
<dbReference type="InterPro" id="IPR032377">
    <property type="entry name" value="STAR_dimer"/>
</dbReference>
<dbReference type="PANTHER" id="PTHR11208:SF104">
    <property type="entry name" value="OS02G0722700 PROTEIN"/>
    <property type="match status" value="1"/>
</dbReference>
<dbReference type="PANTHER" id="PTHR11208">
    <property type="entry name" value="RNA-BINDING PROTEIN RELATED"/>
    <property type="match status" value="1"/>
</dbReference>
<dbReference type="Pfam" id="PF22675">
    <property type="entry name" value="KH-I_KHDC4-BBP"/>
    <property type="match status" value="1"/>
</dbReference>
<dbReference type="Pfam" id="PF16544">
    <property type="entry name" value="STAR_dimer"/>
    <property type="match status" value="1"/>
</dbReference>
<dbReference type="SMART" id="SM00322">
    <property type="entry name" value="KH"/>
    <property type="match status" value="1"/>
</dbReference>
<dbReference type="SUPFAM" id="SSF54791">
    <property type="entry name" value="Eukaryotic type KH-domain (KH-domain type I)"/>
    <property type="match status" value="1"/>
</dbReference>
<gene>
    <name type="ordered locus">At4g26480</name>
    <name type="ORF">M3E9.90</name>
</gene>
<feature type="chain" id="PRO_0000357028" description="KH domain-containing protein At4g26480">
    <location>
        <begin position="1"/>
        <end position="308"/>
    </location>
</feature>
<feature type="domain" description="KH">
    <location>
        <begin position="165"/>
        <end position="232"/>
    </location>
</feature>
<feature type="region of interest" description="Disordered" evidence="2">
    <location>
        <begin position="1"/>
        <end position="26"/>
    </location>
</feature>
<feature type="region of interest" description="Disordered" evidence="2">
    <location>
        <begin position="284"/>
        <end position="308"/>
    </location>
</feature>
<feature type="compositionally biased region" description="Gly residues" evidence="2">
    <location>
        <begin position="7"/>
        <end position="24"/>
    </location>
</feature>
<feature type="modified residue" description="Phosphoserine" evidence="1">
    <location>
        <position position="294"/>
    </location>
</feature>
<feature type="sequence conflict" description="In Ref. 3; AAM14070." evidence="3" ref="3">
    <original>G</original>
    <variation>S</variation>
    <location>
        <position position="308"/>
    </location>
</feature>
<evidence type="ECO:0000250" key="1">
    <source>
        <dbReference type="UniProtKB" id="Q9ZVI3"/>
    </source>
</evidence>
<evidence type="ECO:0000256" key="2">
    <source>
        <dbReference type="SAM" id="MobiDB-lite"/>
    </source>
</evidence>
<evidence type="ECO:0000305" key="3"/>
<proteinExistence type="evidence at transcript level"/>
<protein>
    <recommendedName>
        <fullName>KH domain-containing protein At4g26480</fullName>
    </recommendedName>
    <alternativeName>
        <fullName>Quaking-like protein 1</fullName>
    </alternativeName>
</protein>